<comment type="function">
    <text evidence="3">A type II topoisomerase that negatively supercoils closed circular double-stranded DNA in an ATP-dependent manner.</text>
</comment>
<comment type="catalytic activity">
    <reaction evidence="2">
        <text>ATP-dependent breakage, passage and rejoining of double-stranded DNA.</text>
        <dbReference type="EC" id="5.6.2.2"/>
    </reaction>
</comment>
<comment type="subunit">
    <text evidence="1 4">Made up of two chains. The A chain is responsible for DNA breakage and rejoining; the B chain catalyzes ATP hydrolysis (By similarity). Associated with the mediator complex.</text>
</comment>
<comment type="subcellular location">
    <subcellularLocation>
        <location evidence="3">Plastid</location>
        <location evidence="3">Chloroplast</location>
    </subcellularLocation>
    <subcellularLocation>
        <location evidence="3">Mitochondrion</location>
    </subcellularLocation>
    <subcellularLocation>
        <location evidence="6">Nucleus</location>
    </subcellularLocation>
</comment>
<comment type="similarity">
    <text evidence="1">Belongs to the type II topoisomerase GyrA/ParC subunit family.</text>
</comment>
<comment type="sequence caution" evidence="5">
    <conflict type="erroneous gene model prediction">
        <sequence resource="EMBL-CDS" id="AAF19580"/>
    </conflict>
</comment>
<comment type="sequence caution" evidence="5">
    <conflict type="erroneous gene model prediction">
        <sequence resource="EMBL-CDS" id="AAG51377"/>
    </conflict>
</comment>
<protein>
    <recommendedName>
        <fullName>DNA gyrase subunit A, chloroplastic/mitochondrial</fullName>
        <ecNumber evidence="2">5.6.2.2</ecNumber>
    </recommendedName>
</protein>
<reference key="1">
    <citation type="journal article" date="2000" name="Nature">
        <title>Sequence and analysis of chromosome 3 of the plant Arabidopsis thaliana.</title>
        <authorList>
            <person name="Salanoubat M."/>
            <person name="Lemcke K."/>
            <person name="Rieger M."/>
            <person name="Ansorge W."/>
            <person name="Unseld M."/>
            <person name="Fartmann B."/>
            <person name="Valle G."/>
            <person name="Bloecker H."/>
            <person name="Perez-Alonso M."/>
            <person name="Obermaier B."/>
            <person name="Delseny M."/>
            <person name="Boutry M."/>
            <person name="Grivell L.A."/>
            <person name="Mache R."/>
            <person name="Puigdomenech P."/>
            <person name="De Simone V."/>
            <person name="Choisne N."/>
            <person name="Artiguenave F."/>
            <person name="Robert C."/>
            <person name="Brottier P."/>
            <person name="Wincker P."/>
            <person name="Cattolico L."/>
            <person name="Weissenbach J."/>
            <person name="Saurin W."/>
            <person name="Quetier F."/>
            <person name="Schaefer M."/>
            <person name="Mueller-Auer S."/>
            <person name="Gabel C."/>
            <person name="Fuchs M."/>
            <person name="Benes V."/>
            <person name="Wurmbach E."/>
            <person name="Drzonek H."/>
            <person name="Erfle H."/>
            <person name="Jordan N."/>
            <person name="Bangert S."/>
            <person name="Wiedelmann R."/>
            <person name="Kranz H."/>
            <person name="Voss H."/>
            <person name="Holland R."/>
            <person name="Brandt P."/>
            <person name="Nyakatura G."/>
            <person name="Vezzi A."/>
            <person name="D'Angelo M."/>
            <person name="Pallavicini A."/>
            <person name="Toppo S."/>
            <person name="Simionati B."/>
            <person name="Conrad A."/>
            <person name="Hornischer K."/>
            <person name="Kauer G."/>
            <person name="Loehnert T.-H."/>
            <person name="Nordsiek G."/>
            <person name="Reichelt J."/>
            <person name="Scharfe M."/>
            <person name="Schoen O."/>
            <person name="Bargues M."/>
            <person name="Terol J."/>
            <person name="Climent J."/>
            <person name="Navarro P."/>
            <person name="Collado C."/>
            <person name="Perez-Perez A."/>
            <person name="Ottenwaelder B."/>
            <person name="Duchemin D."/>
            <person name="Cooke R."/>
            <person name="Laudie M."/>
            <person name="Berger-Llauro C."/>
            <person name="Purnelle B."/>
            <person name="Masuy D."/>
            <person name="de Haan M."/>
            <person name="Maarse A.C."/>
            <person name="Alcaraz J.-P."/>
            <person name="Cottet A."/>
            <person name="Casacuberta E."/>
            <person name="Monfort A."/>
            <person name="Argiriou A."/>
            <person name="Flores M."/>
            <person name="Liguori R."/>
            <person name="Vitale D."/>
            <person name="Mannhaupt G."/>
            <person name="Haase D."/>
            <person name="Schoof H."/>
            <person name="Rudd S."/>
            <person name="Zaccaria P."/>
            <person name="Mewes H.-W."/>
            <person name="Mayer K.F.X."/>
            <person name="Kaul S."/>
            <person name="Town C.D."/>
            <person name="Koo H.L."/>
            <person name="Tallon L.J."/>
            <person name="Jenkins J."/>
            <person name="Rooney T."/>
            <person name="Rizzo M."/>
            <person name="Walts A."/>
            <person name="Utterback T."/>
            <person name="Fujii C.Y."/>
            <person name="Shea T.P."/>
            <person name="Creasy T.H."/>
            <person name="Haas B."/>
            <person name="Maiti R."/>
            <person name="Wu D."/>
            <person name="Peterson J."/>
            <person name="Van Aken S."/>
            <person name="Pai G."/>
            <person name="Militscher J."/>
            <person name="Sellers P."/>
            <person name="Gill J.E."/>
            <person name="Feldblyum T.V."/>
            <person name="Preuss D."/>
            <person name="Lin X."/>
            <person name="Nierman W.C."/>
            <person name="Salzberg S.L."/>
            <person name="White O."/>
            <person name="Venter J.C."/>
            <person name="Fraser C.M."/>
            <person name="Kaneko T."/>
            <person name="Nakamura Y."/>
            <person name="Sato S."/>
            <person name="Kato T."/>
            <person name="Asamizu E."/>
            <person name="Sasamoto S."/>
            <person name="Kimura T."/>
            <person name="Idesawa K."/>
            <person name="Kawashima K."/>
            <person name="Kishida Y."/>
            <person name="Kiyokawa C."/>
            <person name="Kohara M."/>
            <person name="Matsumoto M."/>
            <person name="Matsuno A."/>
            <person name="Muraki A."/>
            <person name="Nakayama S."/>
            <person name="Nakazaki N."/>
            <person name="Shinpo S."/>
            <person name="Takeuchi C."/>
            <person name="Wada T."/>
            <person name="Watanabe A."/>
            <person name="Yamada M."/>
            <person name="Yasuda M."/>
            <person name="Tabata S."/>
        </authorList>
    </citation>
    <scope>NUCLEOTIDE SEQUENCE [LARGE SCALE GENOMIC DNA]</scope>
    <source>
        <strain>cv. Columbia</strain>
    </source>
</reference>
<reference key="2">
    <citation type="journal article" date="2017" name="Plant J.">
        <title>Araport11: a complete reannotation of the Arabidopsis thaliana reference genome.</title>
        <authorList>
            <person name="Cheng C.Y."/>
            <person name="Krishnakumar V."/>
            <person name="Chan A.P."/>
            <person name="Thibaud-Nissen F."/>
            <person name="Schobel S."/>
            <person name="Town C.D."/>
        </authorList>
    </citation>
    <scope>GENOME REANNOTATION</scope>
    <source>
        <strain>cv. Columbia</strain>
    </source>
</reference>
<reference key="3">
    <citation type="journal article" date="2004" name="Proc. Natl. Acad. Sci. U.S.A.">
        <title>Arabidopsis thaliana DNA gyrase is targeted to chloroplasts and mitochondria.</title>
        <authorList>
            <person name="Wall M.K."/>
            <person name="Mitchenall L.A."/>
            <person name="Maxwell A."/>
        </authorList>
    </citation>
    <scope>FUNCTION</scope>
    <scope>SUBCELLULAR LOCATION</scope>
</reference>
<reference key="4">
    <citation type="journal article" date="2007" name="Mol. Cell">
        <title>Purification of a plant mediator from Arabidopsis thaliana identifies PFT1 as the Med25 subunit.</title>
        <authorList>
            <person name="Baeckstroem S."/>
            <person name="Elfving N."/>
            <person name="Nilsson R."/>
            <person name="Wingsle G."/>
            <person name="Bjoerklund S."/>
        </authorList>
    </citation>
    <scope>IDENTIFICATION BY MASS SPECTROMETRY</scope>
    <scope>SUBUNIT</scope>
</reference>
<accession>Q9CAF6</accession>
<accession>Q9SG75</accession>
<organism>
    <name type="scientific">Arabidopsis thaliana</name>
    <name type="common">Mouse-ear cress</name>
    <dbReference type="NCBI Taxonomy" id="3702"/>
    <lineage>
        <taxon>Eukaryota</taxon>
        <taxon>Viridiplantae</taxon>
        <taxon>Streptophyta</taxon>
        <taxon>Embryophyta</taxon>
        <taxon>Tracheophyta</taxon>
        <taxon>Spermatophyta</taxon>
        <taxon>Magnoliopsida</taxon>
        <taxon>eudicotyledons</taxon>
        <taxon>Gunneridae</taxon>
        <taxon>Pentapetalae</taxon>
        <taxon>rosids</taxon>
        <taxon>malvids</taxon>
        <taxon>Brassicales</taxon>
        <taxon>Brassicaceae</taxon>
        <taxon>Camelineae</taxon>
        <taxon>Arabidopsis</taxon>
    </lineage>
</organism>
<dbReference type="EC" id="5.6.2.2" evidence="2"/>
<dbReference type="EMBL" id="AC011560">
    <property type="protein sequence ID" value="AAG51377.1"/>
    <property type="status" value="ALT_SEQ"/>
    <property type="molecule type" value="Genomic_DNA"/>
</dbReference>
<dbReference type="EMBL" id="AC011708">
    <property type="protein sequence ID" value="AAF19580.1"/>
    <property type="status" value="ALT_SEQ"/>
    <property type="molecule type" value="Genomic_DNA"/>
</dbReference>
<dbReference type="EMBL" id="CP002686">
    <property type="protein sequence ID" value="AEE74943.1"/>
    <property type="molecule type" value="Genomic_DNA"/>
</dbReference>
<dbReference type="RefSeq" id="NP_187680.2">
    <property type="nucleotide sequence ID" value="NM_111905.3"/>
</dbReference>
<dbReference type="SMR" id="Q9CAF6"/>
<dbReference type="BioGRID" id="5572">
    <property type="interactions" value="21"/>
</dbReference>
<dbReference type="FunCoup" id="Q9CAF6">
    <property type="interactions" value="580"/>
</dbReference>
<dbReference type="IntAct" id="Q9CAF6">
    <property type="interactions" value="1"/>
</dbReference>
<dbReference type="STRING" id="3702.Q9CAF6"/>
<dbReference type="iPTMnet" id="Q9CAF6"/>
<dbReference type="PaxDb" id="3702-AT3G10690.1"/>
<dbReference type="ProteomicsDB" id="247279"/>
<dbReference type="EnsemblPlants" id="AT3G10690.1">
    <property type="protein sequence ID" value="AT3G10690.1"/>
    <property type="gene ID" value="AT3G10690"/>
</dbReference>
<dbReference type="GeneID" id="820238"/>
<dbReference type="Gramene" id="AT3G10690.1">
    <property type="protein sequence ID" value="AT3G10690.1"/>
    <property type="gene ID" value="AT3G10690"/>
</dbReference>
<dbReference type="KEGG" id="ath:AT3G10690"/>
<dbReference type="Araport" id="AT3G10690"/>
<dbReference type="TAIR" id="AT3G10690">
    <property type="gene designation" value="GYRA"/>
</dbReference>
<dbReference type="eggNOG" id="KOG0355">
    <property type="taxonomic scope" value="Eukaryota"/>
</dbReference>
<dbReference type="HOGENOM" id="CLU_002977_6_1_1"/>
<dbReference type="InParanoid" id="Q9CAF6"/>
<dbReference type="OMA" id="THHWLLF"/>
<dbReference type="OrthoDB" id="276498at2759"/>
<dbReference type="PhylomeDB" id="Q9CAF6"/>
<dbReference type="CD-CODE" id="4299E36E">
    <property type="entry name" value="Nucleolus"/>
</dbReference>
<dbReference type="PRO" id="PR:Q9CAF6"/>
<dbReference type="Proteomes" id="UP000006548">
    <property type="component" value="Chromosome 3"/>
</dbReference>
<dbReference type="ExpressionAtlas" id="Q9CAF6">
    <property type="expression patterns" value="baseline and differential"/>
</dbReference>
<dbReference type="GO" id="GO:0009507">
    <property type="term" value="C:chloroplast"/>
    <property type="evidence" value="ECO:0007005"/>
    <property type="project" value="TAIR"/>
</dbReference>
<dbReference type="GO" id="GO:0042644">
    <property type="term" value="C:chloroplast nucleoid"/>
    <property type="evidence" value="ECO:0007005"/>
    <property type="project" value="TAIR"/>
</dbReference>
<dbReference type="GO" id="GO:0005694">
    <property type="term" value="C:chromosome"/>
    <property type="evidence" value="ECO:0007669"/>
    <property type="project" value="InterPro"/>
</dbReference>
<dbReference type="GO" id="GO:0016592">
    <property type="term" value="C:mediator complex"/>
    <property type="evidence" value="ECO:0000314"/>
    <property type="project" value="UniProtKB"/>
</dbReference>
<dbReference type="GO" id="GO:0005739">
    <property type="term" value="C:mitochondrion"/>
    <property type="evidence" value="ECO:0007005"/>
    <property type="project" value="TAIR"/>
</dbReference>
<dbReference type="GO" id="GO:0005524">
    <property type="term" value="F:ATP binding"/>
    <property type="evidence" value="ECO:0007669"/>
    <property type="project" value="UniProtKB-KW"/>
</dbReference>
<dbReference type="GO" id="GO:0003677">
    <property type="term" value="F:DNA binding"/>
    <property type="evidence" value="ECO:0007669"/>
    <property type="project" value="UniProtKB-KW"/>
</dbReference>
<dbReference type="GO" id="GO:0003918">
    <property type="term" value="F:DNA topoisomerase type II (double strand cut, ATP-hydrolyzing) activity"/>
    <property type="evidence" value="ECO:0007669"/>
    <property type="project" value="UniProtKB-EC"/>
</dbReference>
<dbReference type="GO" id="GO:0006265">
    <property type="term" value="P:DNA topological change"/>
    <property type="evidence" value="ECO:0007669"/>
    <property type="project" value="InterPro"/>
</dbReference>
<dbReference type="CDD" id="cd00187">
    <property type="entry name" value="TOP4c"/>
    <property type="match status" value="1"/>
</dbReference>
<dbReference type="FunFam" id="1.10.268.10:FF:000001">
    <property type="entry name" value="DNA gyrase subunit A"/>
    <property type="match status" value="1"/>
</dbReference>
<dbReference type="FunFam" id="2.120.10.90:FF:000007">
    <property type="entry name" value="DNA gyrase subunit A"/>
    <property type="match status" value="1"/>
</dbReference>
<dbReference type="FunFam" id="3.30.1360.40:FF:000002">
    <property type="entry name" value="DNA gyrase subunit A"/>
    <property type="match status" value="1"/>
</dbReference>
<dbReference type="FunFam" id="3.90.199.10:FF:000001">
    <property type="entry name" value="DNA gyrase subunit A"/>
    <property type="match status" value="1"/>
</dbReference>
<dbReference type="Gene3D" id="3.30.1360.40">
    <property type="match status" value="1"/>
</dbReference>
<dbReference type="Gene3D" id="2.120.10.90">
    <property type="entry name" value="DNA gyrase/topoisomerase IV, subunit A, C-terminal"/>
    <property type="match status" value="1"/>
</dbReference>
<dbReference type="Gene3D" id="3.90.199.10">
    <property type="entry name" value="Topoisomerase II, domain 5"/>
    <property type="match status" value="1"/>
</dbReference>
<dbReference type="Gene3D" id="1.10.268.10">
    <property type="entry name" value="Topoisomerase, domain 3"/>
    <property type="match status" value="1"/>
</dbReference>
<dbReference type="HAMAP" id="MF_01897">
    <property type="entry name" value="GyrA"/>
    <property type="match status" value="1"/>
</dbReference>
<dbReference type="InterPro" id="IPR005743">
    <property type="entry name" value="GyrA"/>
</dbReference>
<dbReference type="InterPro" id="IPR006691">
    <property type="entry name" value="GyrA/parC_rep"/>
</dbReference>
<dbReference type="InterPro" id="IPR035516">
    <property type="entry name" value="Gyrase/topoIV_suA_C"/>
</dbReference>
<dbReference type="InterPro" id="IPR013760">
    <property type="entry name" value="Topo_IIA-like_dom_sf"/>
</dbReference>
<dbReference type="InterPro" id="IPR013758">
    <property type="entry name" value="Topo_IIA_A/C_ab"/>
</dbReference>
<dbReference type="InterPro" id="IPR013757">
    <property type="entry name" value="Topo_IIA_A_a_sf"/>
</dbReference>
<dbReference type="InterPro" id="IPR002205">
    <property type="entry name" value="Topo_IIA_dom_A"/>
</dbReference>
<dbReference type="InterPro" id="IPR050220">
    <property type="entry name" value="Type_II_DNA_Topoisomerases"/>
</dbReference>
<dbReference type="NCBIfam" id="TIGR01063">
    <property type="entry name" value="gyrA"/>
    <property type="match status" value="1"/>
</dbReference>
<dbReference type="NCBIfam" id="NF004043">
    <property type="entry name" value="PRK05560.1"/>
    <property type="match status" value="1"/>
</dbReference>
<dbReference type="NCBIfam" id="NF004044">
    <property type="entry name" value="PRK05561.1"/>
    <property type="match status" value="1"/>
</dbReference>
<dbReference type="PANTHER" id="PTHR43493:SF5">
    <property type="entry name" value="DNA GYRASE SUBUNIT A, CHLOROPLASTIC_MITOCHONDRIAL"/>
    <property type="match status" value="1"/>
</dbReference>
<dbReference type="PANTHER" id="PTHR43493">
    <property type="entry name" value="DNA GYRASE/TOPOISOMERASE SUBUNIT A"/>
    <property type="match status" value="1"/>
</dbReference>
<dbReference type="Pfam" id="PF03989">
    <property type="entry name" value="DNA_gyraseA_C"/>
    <property type="match status" value="6"/>
</dbReference>
<dbReference type="Pfam" id="PF00521">
    <property type="entry name" value="DNA_topoisoIV"/>
    <property type="match status" value="1"/>
</dbReference>
<dbReference type="SMART" id="SM00434">
    <property type="entry name" value="TOP4c"/>
    <property type="match status" value="1"/>
</dbReference>
<dbReference type="SUPFAM" id="SSF101904">
    <property type="entry name" value="GyrA/ParC C-terminal domain-like"/>
    <property type="match status" value="1"/>
</dbReference>
<dbReference type="SUPFAM" id="SSF56719">
    <property type="entry name" value="Type II DNA topoisomerase"/>
    <property type="match status" value="1"/>
</dbReference>
<dbReference type="PROSITE" id="PS52040">
    <property type="entry name" value="TOPO_IIA"/>
    <property type="match status" value="1"/>
</dbReference>
<keyword id="KW-0067">ATP-binding</keyword>
<keyword id="KW-0150">Chloroplast</keyword>
<keyword id="KW-0238">DNA-binding</keyword>
<keyword id="KW-0413">Isomerase</keyword>
<keyword id="KW-0496">Mitochondrion</keyword>
<keyword id="KW-0547">Nucleotide-binding</keyword>
<keyword id="KW-0539">Nucleus</keyword>
<keyword id="KW-0934">Plastid</keyword>
<keyword id="KW-1185">Reference proteome</keyword>
<keyword id="KW-0799">Topoisomerase</keyword>
<keyword id="KW-0804">Transcription</keyword>
<keyword id="KW-0805">Transcription regulation</keyword>
<keyword id="KW-0809">Transit peptide</keyword>
<proteinExistence type="evidence at protein level"/>
<feature type="transit peptide" description="Chloroplast and mitochondrion">
    <location>
        <begin position="1"/>
        <end status="unknown"/>
    </location>
</feature>
<feature type="chain" id="PRO_0000247945" description="DNA gyrase subunit A, chloroplastic/mitochondrial">
    <location>
        <begin status="unknown"/>
        <end position="950"/>
    </location>
</feature>
<feature type="domain" description="Topo IIA-type catalytic" evidence="2">
    <location>
        <begin position="127"/>
        <end position="595"/>
    </location>
</feature>
<feature type="short sequence motif" description="GyrA-box" evidence="1">
    <location>
        <begin position="622"/>
        <end position="628"/>
    </location>
</feature>
<feature type="active site" description="O-(5'-phospho-DNA)-tyrosine intermediate" evidence="2">
    <location>
        <position position="215"/>
    </location>
</feature>
<gene>
    <name type="primary">GYRA</name>
    <name type="ordered locus">At3g10690</name>
    <name type="ORF">F13M14.2</name>
    <name type="ORF">T7M13.23</name>
</gene>
<name>GYRA_ARATH</name>
<evidence type="ECO:0000250" key="1">
    <source>
        <dbReference type="UniProtKB" id="P0AES4"/>
    </source>
</evidence>
<evidence type="ECO:0000255" key="2">
    <source>
        <dbReference type="PROSITE-ProRule" id="PRU01384"/>
    </source>
</evidence>
<evidence type="ECO:0000269" key="3">
    <source>
    </source>
</evidence>
<evidence type="ECO:0000269" key="4">
    <source>
    </source>
</evidence>
<evidence type="ECO:0000305" key="5"/>
<evidence type="ECO:0000305" key="6">
    <source>
    </source>
</evidence>
<sequence length="950" mass="104538">MTPVLCHSTASIPNPNSLMSLSSTLRLSSSLLRRSFFRFPLTDPLCRLRRTEPSATRFFSSRTPRSGKFVVGAGKRGDEQVKEESGANNGGLVVSGDESRIVPFELHKEATESYMSYALSVLLGRALPDVRDGLKPVHRRILFAMHELGMSSKKPYKKCARVVGEVLGKFHPHGDTAVYDSLVRMAQSFSLRCPLIQGHGNFGSIDADPPAAMRYTECRLDPLAEAVLLSDLDQDTVDFVANFDNSQKEPAVLPARLPALLLNGASGIAVGMATNIPPHNLGELVDVLCALIHNPEATLQELLEYMPAPDFPTGGIIMGNLGVLDAYRTGRGRVVVRGKAEVELLDPKTKRNAVIITEIPYQTNKATLVQKIAELVENKTLEGISDIRDESDRNGMRVVIELKRGGDPALVLNNLYRHTALQSSFSCNMVGICDGEPKLMGLKELLQAFIDFRCSVVERRARFKLSHAQQRKHIIEGIVVGLDNVDEVIELITKASSHSSATAALQSEYGLSEKQAEAILEITLRRLTALERKKFTDESSSLTEQITKLEQLLSTRTNILKLIEQEAIELKDRFSSPRRSMLEDSDSGDLEDIDVIPNEEMLMAVSEKGYVKRMKADTFNLQHRGTIGKSVGKLRVDDAMSDFLVCHAHDHVLFFSDRGIVYSTRAYKIPECSRNAAGTPLVQILSMSEGERVTSIVPVSEFAEDRYLLMLTVNGCIKKVSLKLFSGIRSTGIIAIQLNSGDELKWVRCCSSDDLVAMASQNGMVALSTCDGVRTLSRNTKGVTAMRLKNEDKIASMDIIPASLRKDMEEKSEDASLVKQSTGPWLLFVCENGYGKRVPLSSFRRSRLNRVGLSGYKFAEDDRLAAVFVVGYSLAEDGESDEQVVLVSQSGTVNRIKVRDISIQSRRARGVILMRLDHAGKIQSASLISAADEEETEGTLSNEAVEAVSL</sequence>